<evidence type="ECO:0000255" key="1">
    <source>
        <dbReference type="HAMAP-Rule" id="MF_00440"/>
    </source>
</evidence>
<gene>
    <name evidence="1" type="primary">nrdR</name>
    <name type="ordered locus">Pput_0548</name>
</gene>
<sequence>MHCPFCGANDTKVIDSRLVAEGEQVRRRRECVACGERFTTFETAELVLPRLIKQDGTRQPFDEEKLRAGMQRALEKRPVSVERLEAALAHIKSRLRATGEREVKSLVVGEMVMAELRKLDEVAYIRFASVYRRFQDLDEFREEIDRLAREPAKE</sequence>
<protein>
    <recommendedName>
        <fullName evidence="1">Transcriptional repressor NrdR</fullName>
    </recommendedName>
</protein>
<keyword id="KW-0067">ATP-binding</keyword>
<keyword id="KW-0238">DNA-binding</keyword>
<keyword id="KW-0479">Metal-binding</keyword>
<keyword id="KW-0547">Nucleotide-binding</keyword>
<keyword id="KW-0678">Repressor</keyword>
<keyword id="KW-0804">Transcription</keyword>
<keyword id="KW-0805">Transcription regulation</keyword>
<keyword id="KW-0862">Zinc</keyword>
<keyword id="KW-0863">Zinc-finger</keyword>
<organism>
    <name type="scientific">Pseudomonas putida (strain ATCC 700007 / DSM 6899 / JCM 31910 / BCRC 17059 / LMG 24140 / F1)</name>
    <dbReference type="NCBI Taxonomy" id="351746"/>
    <lineage>
        <taxon>Bacteria</taxon>
        <taxon>Pseudomonadati</taxon>
        <taxon>Pseudomonadota</taxon>
        <taxon>Gammaproteobacteria</taxon>
        <taxon>Pseudomonadales</taxon>
        <taxon>Pseudomonadaceae</taxon>
        <taxon>Pseudomonas</taxon>
    </lineage>
</organism>
<name>NRDR_PSEP1</name>
<comment type="function">
    <text evidence="1">Negatively regulates transcription of bacterial ribonucleotide reductase nrd genes and operons by binding to NrdR-boxes.</text>
</comment>
<comment type="cofactor">
    <cofactor evidence="1">
        <name>Zn(2+)</name>
        <dbReference type="ChEBI" id="CHEBI:29105"/>
    </cofactor>
    <text evidence="1">Binds 1 zinc ion.</text>
</comment>
<comment type="similarity">
    <text evidence="1">Belongs to the NrdR family.</text>
</comment>
<feature type="chain" id="PRO_1000080804" description="Transcriptional repressor NrdR">
    <location>
        <begin position="1"/>
        <end position="154"/>
    </location>
</feature>
<feature type="domain" description="ATP-cone" evidence="1">
    <location>
        <begin position="49"/>
        <end position="139"/>
    </location>
</feature>
<feature type="zinc finger region" evidence="1">
    <location>
        <begin position="3"/>
        <end position="34"/>
    </location>
</feature>
<proteinExistence type="inferred from homology"/>
<dbReference type="EMBL" id="CP000712">
    <property type="protein sequence ID" value="ABQ76716.1"/>
    <property type="molecule type" value="Genomic_DNA"/>
</dbReference>
<dbReference type="SMR" id="A5VXV6"/>
<dbReference type="KEGG" id="ppf:Pput_0548"/>
<dbReference type="eggNOG" id="COG1327">
    <property type="taxonomic scope" value="Bacteria"/>
</dbReference>
<dbReference type="HOGENOM" id="CLU_108412_0_0_6"/>
<dbReference type="GO" id="GO:0005524">
    <property type="term" value="F:ATP binding"/>
    <property type="evidence" value="ECO:0007669"/>
    <property type="project" value="UniProtKB-KW"/>
</dbReference>
<dbReference type="GO" id="GO:0003677">
    <property type="term" value="F:DNA binding"/>
    <property type="evidence" value="ECO:0007669"/>
    <property type="project" value="UniProtKB-KW"/>
</dbReference>
<dbReference type="GO" id="GO:0008270">
    <property type="term" value="F:zinc ion binding"/>
    <property type="evidence" value="ECO:0007669"/>
    <property type="project" value="UniProtKB-UniRule"/>
</dbReference>
<dbReference type="GO" id="GO:0045892">
    <property type="term" value="P:negative regulation of DNA-templated transcription"/>
    <property type="evidence" value="ECO:0007669"/>
    <property type="project" value="UniProtKB-UniRule"/>
</dbReference>
<dbReference type="HAMAP" id="MF_00440">
    <property type="entry name" value="NrdR"/>
    <property type="match status" value="1"/>
</dbReference>
<dbReference type="InterPro" id="IPR005144">
    <property type="entry name" value="ATP-cone_dom"/>
</dbReference>
<dbReference type="InterPro" id="IPR055173">
    <property type="entry name" value="NrdR-like_N"/>
</dbReference>
<dbReference type="InterPro" id="IPR003796">
    <property type="entry name" value="RNR_NrdR-like"/>
</dbReference>
<dbReference type="NCBIfam" id="TIGR00244">
    <property type="entry name" value="transcriptional regulator NrdR"/>
    <property type="match status" value="1"/>
</dbReference>
<dbReference type="PANTHER" id="PTHR30455">
    <property type="entry name" value="TRANSCRIPTIONAL REPRESSOR NRDR"/>
    <property type="match status" value="1"/>
</dbReference>
<dbReference type="PANTHER" id="PTHR30455:SF2">
    <property type="entry name" value="TRANSCRIPTIONAL REPRESSOR NRDR"/>
    <property type="match status" value="1"/>
</dbReference>
<dbReference type="Pfam" id="PF03477">
    <property type="entry name" value="ATP-cone"/>
    <property type="match status" value="1"/>
</dbReference>
<dbReference type="Pfam" id="PF22811">
    <property type="entry name" value="Zn_ribbon_NrdR"/>
    <property type="match status" value="1"/>
</dbReference>
<dbReference type="PROSITE" id="PS51161">
    <property type="entry name" value="ATP_CONE"/>
    <property type="match status" value="1"/>
</dbReference>
<reference key="1">
    <citation type="submission" date="2007-05" db="EMBL/GenBank/DDBJ databases">
        <title>Complete sequence of Pseudomonas putida F1.</title>
        <authorList>
            <consortium name="US DOE Joint Genome Institute"/>
            <person name="Copeland A."/>
            <person name="Lucas S."/>
            <person name="Lapidus A."/>
            <person name="Barry K."/>
            <person name="Detter J.C."/>
            <person name="Glavina del Rio T."/>
            <person name="Hammon N."/>
            <person name="Israni S."/>
            <person name="Dalin E."/>
            <person name="Tice H."/>
            <person name="Pitluck S."/>
            <person name="Chain P."/>
            <person name="Malfatti S."/>
            <person name="Shin M."/>
            <person name="Vergez L."/>
            <person name="Schmutz J."/>
            <person name="Larimer F."/>
            <person name="Land M."/>
            <person name="Hauser L."/>
            <person name="Kyrpides N."/>
            <person name="Lykidis A."/>
            <person name="Parales R."/>
            <person name="Richardson P."/>
        </authorList>
    </citation>
    <scope>NUCLEOTIDE SEQUENCE [LARGE SCALE GENOMIC DNA]</scope>
    <source>
        <strain>ATCC 700007 / DSM 6899 / JCM 31910 / BCRC 17059 / LMG 24140 / F1</strain>
    </source>
</reference>
<accession>A5VXV6</accession>